<organism>
    <name type="scientific">Mycobacterium tuberculosis (strain ATCC 25618 / H37Rv)</name>
    <dbReference type="NCBI Taxonomy" id="83332"/>
    <lineage>
        <taxon>Bacteria</taxon>
        <taxon>Bacillati</taxon>
        <taxon>Actinomycetota</taxon>
        <taxon>Actinomycetes</taxon>
        <taxon>Mycobacteriales</taxon>
        <taxon>Mycobacteriaceae</taxon>
        <taxon>Mycobacterium</taxon>
        <taxon>Mycobacterium tuberculosis complex</taxon>
    </lineage>
</organism>
<feature type="chain" id="PRO_0000060116" description="Molybdenum transport system permease protein ModB">
    <location>
        <begin position="1"/>
        <end position="264"/>
    </location>
</feature>
<feature type="transmembrane region" description="Helical" evidence="2">
    <location>
        <begin position="11"/>
        <end position="31"/>
    </location>
</feature>
<feature type="transmembrane region" description="Helical" evidence="2">
    <location>
        <begin position="57"/>
        <end position="77"/>
    </location>
</feature>
<feature type="transmembrane region" description="Helical" evidence="2">
    <location>
        <begin position="90"/>
        <end position="110"/>
    </location>
</feature>
<feature type="transmembrane region" description="Helical" evidence="2">
    <location>
        <begin position="127"/>
        <end position="147"/>
    </location>
</feature>
<feature type="transmembrane region" description="Helical" evidence="2">
    <location>
        <begin position="176"/>
        <end position="196"/>
    </location>
</feature>
<feature type="transmembrane region" description="Helical" evidence="2">
    <location>
        <begin position="234"/>
        <end position="254"/>
    </location>
</feature>
<feature type="domain" description="ABC transmembrane type-1" evidence="2">
    <location>
        <begin position="51"/>
        <end position="253"/>
    </location>
</feature>
<keyword id="KW-1003">Cell membrane</keyword>
<keyword id="KW-0472">Membrane</keyword>
<keyword id="KW-0500">Molybdenum</keyword>
<keyword id="KW-1185">Reference proteome</keyword>
<keyword id="KW-0812">Transmembrane</keyword>
<keyword id="KW-1133">Transmembrane helix</keyword>
<keyword id="KW-0813">Transport</keyword>
<reference key="1">
    <citation type="submission" date="1997-03" db="EMBL/GenBank/DDBJ databases">
        <authorList>
            <person name="Laqueyrerie A."/>
        </authorList>
    </citation>
    <scope>NUCLEOTIDE SEQUENCE [GENOMIC DNA]</scope>
    <source>
        <strain>ATCC 25618 / H37Rv</strain>
    </source>
</reference>
<reference key="2">
    <citation type="journal article" date="1998" name="Nature">
        <title>Deciphering the biology of Mycobacterium tuberculosis from the complete genome sequence.</title>
        <authorList>
            <person name="Cole S.T."/>
            <person name="Brosch R."/>
            <person name="Parkhill J."/>
            <person name="Garnier T."/>
            <person name="Churcher C.M."/>
            <person name="Harris D.E."/>
            <person name="Gordon S.V."/>
            <person name="Eiglmeier K."/>
            <person name="Gas S."/>
            <person name="Barry C.E. III"/>
            <person name="Tekaia F."/>
            <person name="Badcock K."/>
            <person name="Basham D."/>
            <person name="Brown D."/>
            <person name="Chillingworth T."/>
            <person name="Connor R."/>
            <person name="Davies R.M."/>
            <person name="Devlin K."/>
            <person name="Feltwell T."/>
            <person name="Gentles S."/>
            <person name="Hamlin N."/>
            <person name="Holroyd S."/>
            <person name="Hornsby T."/>
            <person name="Jagels K."/>
            <person name="Krogh A."/>
            <person name="McLean J."/>
            <person name="Moule S."/>
            <person name="Murphy L.D."/>
            <person name="Oliver S."/>
            <person name="Osborne J."/>
            <person name="Quail M.A."/>
            <person name="Rajandream M.A."/>
            <person name="Rogers J."/>
            <person name="Rutter S."/>
            <person name="Seeger K."/>
            <person name="Skelton S."/>
            <person name="Squares S."/>
            <person name="Squares R."/>
            <person name="Sulston J.E."/>
            <person name="Taylor K."/>
            <person name="Whitehead S."/>
            <person name="Barrell B.G."/>
        </authorList>
    </citation>
    <scope>NUCLEOTIDE SEQUENCE [LARGE SCALE GENOMIC DNA]</scope>
    <source>
        <strain>ATCC 25618 / H37Rv</strain>
    </source>
</reference>
<sequence>MHPPTDLPRWVYLPAIAGIVFVAMPLVAIAIRVDWPRFWALITTPSSQTALLLSVKTAAASTVLCVLLGVPMALVLARSRGRLVRSLRPLILLPLVLPPVVGGIALLYAFGRLGLIGRYLEAAGISIAFSTAAVVLAQTFVSLPYLVISLEGAARTAGADYEVVAATLGARPGTVWWRVTLPLLLPGVVSGSVLAFARSLGEFGATLTFAGSRQGVTRTLPLEIYLQRVTDPDAAVALSLLLVVVAALVVLGVGARTPIGTDTR</sequence>
<proteinExistence type="inferred from homology"/>
<evidence type="ECO:0000250" key="1"/>
<evidence type="ECO:0000255" key="2">
    <source>
        <dbReference type="PROSITE-ProRule" id="PRU00441"/>
    </source>
</evidence>
<evidence type="ECO:0000305" key="3"/>
<accession>P9WG13</accession>
<accession>L0TAT4</accession>
<accession>O08061</accession>
<accession>P0A624</accession>
<accession>P95156</accession>
<protein>
    <recommendedName>
        <fullName>Molybdenum transport system permease protein ModB</fullName>
    </recommendedName>
</protein>
<comment type="function">
    <text evidence="1">Part of the binding-protein-dependent transport system ModABCD for molybdenum; probably responsible for the translocation of the substrate across the membrane.</text>
</comment>
<comment type="subcellular location">
    <subcellularLocation>
        <location evidence="3">Cell membrane</location>
        <topology evidence="2">Multi-pass membrane protein</topology>
    </subcellularLocation>
</comment>
<comment type="similarity">
    <text evidence="3">Belongs to the binding-protein-dependent transport system permease family. CysTW subfamily.</text>
</comment>
<gene>
    <name type="primary">modB</name>
    <name type="ordered locus">Rv1858</name>
    <name type="ORF">MTCY359.15c</name>
</gene>
<name>MODB_MYCTU</name>
<dbReference type="EMBL" id="X99258">
    <property type="protein sequence ID" value="CAA67643.1"/>
    <property type="molecule type" value="Genomic_DNA"/>
</dbReference>
<dbReference type="EMBL" id="AL123456">
    <property type="protein sequence ID" value="CCP44624.1"/>
    <property type="molecule type" value="Genomic_DNA"/>
</dbReference>
<dbReference type="PIR" id="B70666">
    <property type="entry name" value="B70666"/>
</dbReference>
<dbReference type="RefSeq" id="NP_216374.1">
    <property type="nucleotide sequence ID" value="NC_000962.3"/>
</dbReference>
<dbReference type="RefSeq" id="WP_003409329.1">
    <property type="nucleotide sequence ID" value="NZ_NVQJ01000013.1"/>
</dbReference>
<dbReference type="SMR" id="P9WG13"/>
<dbReference type="FunCoup" id="P9WG13">
    <property type="interactions" value="87"/>
</dbReference>
<dbReference type="STRING" id="83332.Rv1858"/>
<dbReference type="TCDB" id="3.A.1.8.5">
    <property type="family name" value="the atp-binding cassette (abc) superfamily"/>
</dbReference>
<dbReference type="PaxDb" id="83332-Rv1858"/>
<dbReference type="DNASU" id="885723"/>
<dbReference type="GeneID" id="885723"/>
<dbReference type="KEGG" id="mtu:Rv1858"/>
<dbReference type="KEGG" id="mtv:RVBD_1858"/>
<dbReference type="TubercuList" id="Rv1858"/>
<dbReference type="eggNOG" id="COG4149">
    <property type="taxonomic scope" value="Bacteria"/>
</dbReference>
<dbReference type="InParanoid" id="P9WG13"/>
<dbReference type="OrthoDB" id="9774448at2"/>
<dbReference type="PhylomeDB" id="P9WG13"/>
<dbReference type="Proteomes" id="UP000001584">
    <property type="component" value="Chromosome"/>
</dbReference>
<dbReference type="GO" id="GO:0005886">
    <property type="term" value="C:plasma membrane"/>
    <property type="evidence" value="ECO:0000318"/>
    <property type="project" value="GO_Central"/>
</dbReference>
<dbReference type="GO" id="GO:0015098">
    <property type="term" value="F:molybdate ion transmembrane transporter activity"/>
    <property type="evidence" value="ECO:0007669"/>
    <property type="project" value="InterPro"/>
</dbReference>
<dbReference type="CDD" id="cd06261">
    <property type="entry name" value="TM_PBP2"/>
    <property type="match status" value="1"/>
</dbReference>
<dbReference type="FunFam" id="1.10.3720.10:FF:000128">
    <property type="entry name" value="Molybdenum transport system permease"/>
    <property type="match status" value="1"/>
</dbReference>
<dbReference type="Gene3D" id="1.10.3720.10">
    <property type="entry name" value="MetI-like"/>
    <property type="match status" value="1"/>
</dbReference>
<dbReference type="InterPro" id="IPR000515">
    <property type="entry name" value="MetI-like"/>
</dbReference>
<dbReference type="InterPro" id="IPR035906">
    <property type="entry name" value="MetI-like_sf"/>
</dbReference>
<dbReference type="InterPro" id="IPR011867">
    <property type="entry name" value="ModB_ABC"/>
</dbReference>
<dbReference type="InterPro" id="IPR006469">
    <property type="entry name" value="NifC_ABC_porter"/>
</dbReference>
<dbReference type="NCBIfam" id="TIGR01581">
    <property type="entry name" value="Mo_ABC_porter"/>
    <property type="match status" value="1"/>
</dbReference>
<dbReference type="NCBIfam" id="TIGR02141">
    <property type="entry name" value="modB_ABC"/>
    <property type="match status" value="1"/>
</dbReference>
<dbReference type="PANTHER" id="PTHR30183">
    <property type="entry name" value="MOLYBDENUM TRANSPORT SYSTEM PERMEASE PROTEIN MODB"/>
    <property type="match status" value="1"/>
</dbReference>
<dbReference type="PANTHER" id="PTHR30183:SF3">
    <property type="entry name" value="MOLYBDENUM TRANSPORT SYSTEM PERMEASE PROTEIN MODB"/>
    <property type="match status" value="1"/>
</dbReference>
<dbReference type="Pfam" id="PF00528">
    <property type="entry name" value="BPD_transp_1"/>
    <property type="match status" value="1"/>
</dbReference>
<dbReference type="SUPFAM" id="SSF161098">
    <property type="entry name" value="MetI-like"/>
    <property type="match status" value="1"/>
</dbReference>
<dbReference type="PROSITE" id="PS50928">
    <property type="entry name" value="ABC_TM1"/>
    <property type="match status" value="1"/>
</dbReference>